<organism>
    <name type="scientific">Cereibacter sphaeroides (strain KD131 / KCTC 12085)</name>
    <name type="common">Rhodobacter sphaeroides</name>
    <dbReference type="NCBI Taxonomy" id="557760"/>
    <lineage>
        <taxon>Bacteria</taxon>
        <taxon>Pseudomonadati</taxon>
        <taxon>Pseudomonadota</taxon>
        <taxon>Alphaproteobacteria</taxon>
        <taxon>Rhodobacterales</taxon>
        <taxon>Paracoccaceae</taxon>
        <taxon>Cereibacter</taxon>
    </lineage>
</organism>
<gene>
    <name evidence="1" type="primary">coaX</name>
    <name type="ordered locus">RSKD131_0846</name>
</gene>
<protein>
    <recommendedName>
        <fullName evidence="1">Type III pantothenate kinase</fullName>
        <ecNumber evidence="1">2.7.1.33</ecNumber>
    </recommendedName>
    <alternativeName>
        <fullName evidence="1">PanK-III</fullName>
    </alternativeName>
    <alternativeName>
        <fullName evidence="1">Pantothenic acid kinase</fullName>
    </alternativeName>
</protein>
<name>COAX_CERSK</name>
<feature type="chain" id="PRO_1000165206" description="Type III pantothenate kinase">
    <location>
        <begin position="1"/>
        <end position="257"/>
    </location>
</feature>
<feature type="active site" description="Proton acceptor" evidence="1">
    <location>
        <position position="109"/>
    </location>
</feature>
<feature type="binding site" evidence="1">
    <location>
        <begin position="6"/>
        <end position="13"/>
    </location>
    <ligand>
        <name>ATP</name>
        <dbReference type="ChEBI" id="CHEBI:30616"/>
    </ligand>
</feature>
<feature type="binding site" evidence="1">
    <location>
        <begin position="107"/>
        <end position="110"/>
    </location>
    <ligand>
        <name>substrate</name>
    </ligand>
</feature>
<feature type="binding site" evidence="1">
    <location>
        <position position="129"/>
    </location>
    <ligand>
        <name>K(+)</name>
        <dbReference type="ChEBI" id="CHEBI:29103"/>
    </ligand>
</feature>
<feature type="binding site" evidence="1">
    <location>
        <position position="132"/>
    </location>
    <ligand>
        <name>ATP</name>
        <dbReference type="ChEBI" id="CHEBI:30616"/>
    </ligand>
</feature>
<feature type="binding site" evidence="1">
    <location>
        <position position="184"/>
    </location>
    <ligand>
        <name>substrate</name>
    </ligand>
</feature>
<dbReference type="EC" id="2.7.1.33" evidence="1"/>
<dbReference type="EMBL" id="CP001150">
    <property type="protein sequence ID" value="ACM00706.1"/>
    <property type="molecule type" value="Genomic_DNA"/>
</dbReference>
<dbReference type="RefSeq" id="WP_009564427.1">
    <property type="nucleotide sequence ID" value="NC_011963.1"/>
</dbReference>
<dbReference type="SMR" id="B9KQX9"/>
<dbReference type="GeneID" id="67446287"/>
<dbReference type="KEGG" id="rsk:RSKD131_0846"/>
<dbReference type="HOGENOM" id="CLU_066627_1_0_5"/>
<dbReference type="UniPathway" id="UPA00241">
    <property type="reaction ID" value="UER00352"/>
</dbReference>
<dbReference type="GO" id="GO:0005737">
    <property type="term" value="C:cytoplasm"/>
    <property type="evidence" value="ECO:0007669"/>
    <property type="project" value="UniProtKB-SubCell"/>
</dbReference>
<dbReference type="GO" id="GO:0005524">
    <property type="term" value="F:ATP binding"/>
    <property type="evidence" value="ECO:0007669"/>
    <property type="project" value="UniProtKB-UniRule"/>
</dbReference>
<dbReference type="GO" id="GO:0046872">
    <property type="term" value="F:metal ion binding"/>
    <property type="evidence" value="ECO:0007669"/>
    <property type="project" value="UniProtKB-KW"/>
</dbReference>
<dbReference type="GO" id="GO:0004594">
    <property type="term" value="F:pantothenate kinase activity"/>
    <property type="evidence" value="ECO:0007669"/>
    <property type="project" value="UniProtKB-UniRule"/>
</dbReference>
<dbReference type="GO" id="GO:0015937">
    <property type="term" value="P:coenzyme A biosynthetic process"/>
    <property type="evidence" value="ECO:0007669"/>
    <property type="project" value="UniProtKB-UniRule"/>
</dbReference>
<dbReference type="CDD" id="cd24015">
    <property type="entry name" value="ASKHA_NBD_PanK-III"/>
    <property type="match status" value="1"/>
</dbReference>
<dbReference type="Gene3D" id="3.30.420.40">
    <property type="match status" value="2"/>
</dbReference>
<dbReference type="HAMAP" id="MF_01274">
    <property type="entry name" value="Pantothen_kinase_3"/>
    <property type="match status" value="1"/>
</dbReference>
<dbReference type="InterPro" id="IPR043129">
    <property type="entry name" value="ATPase_NBD"/>
</dbReference>
<dbReference type="InterPro" id="IPR004619">
    <property type="entry name" value="Type_III_PanK"/>
</dbReference>
<dbReference type="NCBIfam" id="TIGR00671">
    <property type="entry name" value="baf"/>
    <property type="match status" value="1"/>
</dbReference>
<dbReference type="NCBIfam" id="NF009844">
    <property type="entry name" value="PRK13318.1-2"/>
    <property type="match status" value="1"/>
</dbReference>
<dbReference type="NCBIfam" id="NF009848">
    <property type="entry name" value="PRK13318.1-6"/>
    <property type="match status" value="1"/>
</dbReference>
<dbReference type="NCBIfam" id="NF009855">
    <property type="entry name" value="PRK13321.1"/>
    <property type="match status" value="1"/>
</dbReference>
<dbReference type="PANTHER" id="PTHR34265">
    <property type="entry name" value="TYPE III PANTOTHENATE KINASE"/>
    <property type="match status" value="1"/>
</dbReference>
<dbReference type="PANTHER" id="PTHR34265:SF1">
    <property type="entry name" value="TYPE III PANTOTHENATE KINASE"/>
    <property type="match status" value="1"/>
</dbReference>
<dbReference type="Pfam" id="PF03309">
    <property type="entry name" value="Pan_kinase"/>
    <property type="match status" value="1"/>
</dbReference>
<dbReference type="SUPFAM" id="SSF53067">
    <property type="entry name" value="Actin-like ATPase domain"/>
    <property type="match status" value="2"/>
</dbReference>
<keyword id="KW-0067">ATP-binding</keyword>
<keyword id="KW-0173">Coenzyme A biosynthesis</keyword>
<keyword id="KW-0963">Cytoplasm</keyword>
<keyword id="KW-0418">Kinase</keyword>
<keyword id="KW-0479">Metal-binding</keyword>
<keyword id="KW-0547">Nucleotide-binding</keyword>
<keyword id="KW-0630">Potassium</keyword>
<keyword id="KW-0808">Transferase</keyword>
<proteinExistence type="inferred from homology"/>
<evidence type="ECO:0000255" key="1">
    <source>
        <dbReference type="HAMAP-Rule" id="MF_01274"/>
    </source>
</evidence>
<comment type="function">
    <text evidence="1">Catalyzes the phosphorylation of pantothenate (Pan), the first step in CoA biosynthesis.</text>
</comment>
<comment type="catalytic activity">
    <reaction evidence="1">
        <text>(R)-pantothenate + ATP = (R)-4'-phosphopantothenate + ADP + H(+)</text>
        <dbReference type="Rhea" id="RHEA:16373"/>
        <dbReference type="ChEBI" id="CHEBI:10986"/>
        <dbReference type="ChEBI" id="CHEBI:15378"/>
        <dbReference type="ChEBI" id="CHEBI:29032"/>
        <dbReference type="ChEBI" id="CHEBI:30616"/>
        <dbReference type="ChEBI" id="CHEBI:456216"/>
        <dbReference type="EC" id="2.7.1.33"/>
    </reaction>
</comment>
<comment type="cofactor">
    <cofactor evidence="1">
        <name>NH4(+)</name>
        <dbReference type="ChEBI" id="CHEBI:28938"/>
    </cofactor>
    <cofactor evidence="1">
        <name>K(+)</name>
        <dbReference type="ChEBI" id="CHEBI:29103"/>
    </cofactor>
    <text evidence="1">A monovalent cation. Ammonium or potassium.</text>
</comment>
<comment type="pathway">
    <text evidence="1">Cofactor biosynthesis; coenzyme A biosynthesis; CoA from (R)-pantothenate: step 1/5.</text>
</comment>
<comment type="subunit">
    <text evidence="1">Homodimer.</text>
</comment>
<comment type="subcellular location">
    <subcellularLocation>
        <location evidence="1">Cytoplasm</location>
    </subcellularLocation>
</comment>
<comment type="similarity">
    <text evidence="1">Belongs to the type III pantothenate kinase family.</text>
</comment>
<accession>B9KQX9</accession>
<sequence>MLLAIDCGNTNTVFSIWDGTQFLATWRIATDHKRTADEYHVWLSTLLSLTKIEARISEAVISSTVPRVVFNLRVLCNRYYDCRPLVVGKPECRLPVAPRVDQGTTVGPDRLVNTVAGFHLHGGNLIVVDFGTATTFDVVDADGAYIGGVIAPGVNLSLEALHMAAAALPHVDVTKPQQAIGTNTVACIQSGVYWGYIGLVEGIVRQIRLERDSPMKVIATGGLAPLFDQGFNLFDRVEDDLTMQGLVLIHQYNKDLE</sequence>
<reference key="1">
    <citation type="journal article" date="2009" name="J. Bacteriol.">
        <title>Complete genome sequence of Rhodobacter sphaeroides KD131.</title>
        <authorList>
            <person name="Lim S.-K."/>
            <person name="Kim S.J."/>
            <person name="Cha S.H."/>
            <person name="Oh Y.-K."/>
            <person name="Rhee H.-J."/>
            <person name="Kim M.-S."/>
            <person name="Lee J.K."/>
        </authorList>
    </citation>
    <scope>NUCLEOTIDE SEQUENCE [LARGE SCALE GENOMIC DNA]</scope>
    <source>
        <strain>KD131 / KCTC 12085</strain>
    </source>
</reference>